<reference key="1">
    <citation type="journal article" date="2008" name="Nature">
        <title>The Trichoplax genome and the nature of placozoans.</title>
        <authorList>
            <person name="Srivastava M."/>
            <person name="Begovic E."/>
            <person name="Chapman J."/>
            <person name="Putnam N.H."/>
            <person name="Hellsten U."/>
            <person name="Kawashima T."/>
            <person name="Kuo A."/>
            <person name="Mitros T."/>
            <person name="Salamov A."/>
            <person name="Carpenter M.L."/>
            <person name="Signorovitch A.Y."/>
            <person name="Moreno M.A."/>
            <person name="Kamm K."/>
            <person name="Grimwood J."/>
            <person name="Schmutz J."/>
            <person name="Shapiro H."/>
            <person name="Grigoriev I.V."/>
            <person name="Buss L.W."/>
            <person name="Schierwater B."/>
            <person name="Dellaporta S.L."/>
            <person name="Rokhsar D.S."/>
        </authorList>
    </citation>
    <scope>NUCLEOTIDE SEQUENCE [LARGE SCALE GENOMIC DNA]</scope>
    <source>
        <strain>Grell-BS-1999</strain>
    </source>
</reference>
<protein>
    <recommendedName>
        <fullName evidence="1">Small ribosomal subunit protein uS2</fullName>
    </recommendedName>
    <alternativeName>
        <fullName evidence="3">40S ribosomal protein SA</fullName>
    </alternativeName>
</protein>
<name>RSSA_TRIAD</name>
<feature type="initiator methionine" description="Removed" evidence="1">
    <location>
        <position position="1"/>
    </location>
</feature>
<feature type="chain" id="PRO_0000371654" description="Small ribosomal subunit protein uS2">
    <location>
        <begin position="2"/>
        <end position="286"/>
    </location>
</feature>
<feature type="region of interest" description="Disordered" evidence="2">
    <location>
        <begin position="213"/>
        <end position="286"/>
    </location>
</feature>
<feature type="compositionally biased region" description="Low complexity" evidence="2">
    <location>
        <begin position="227"/>
        <end position="241"/>
    </location>
</feature>
<feature type="compositionally biased region" description="Polar residues" evidence="2">
    <location>
        <begin position="244"/>
        <end position="270"/>
    </location>
</feature>
<feature type="compositionally biased region" description="Gly residues" evidence="2">
    <location>
        <begin position="274"/>
        <end position="286"/>
    </location>
</feature>
<keyword id="KW-0963">Cytoplasm</keyword>
<keyword id="KW-1185">Reference proteome</keyword>
<keyword id="KW-0687">Ribonucleoprotein</keyword>
<keyword id="KW-0689">Ribosomal protein</keyword>
<dbReference type="EMBL" id="DS985242">
    <property type="protein sequence ID" value="EDV27719.1"/>
    <property type="molecule type" value="Genomic_DNA"/>
</dbReference>
<dbReference type="RefSeq" id="XP_002109553.1">
    <property type="nucleotide sequence ID" value="XM_002109517.1"/>
</dbReference>
<dbReference type="SMR" id="B3RPX6"/>
<dbReference type="FunCoup" id="B3RPX6">
    <property type="interactions" value="1517"/>
</dbReference>
<dbReference type="STRING" id="10228.B3RPX6"/>
<dbReference type="EnsemblMetazoa" id="TriadT49917">
    <property type="protein sequence ID" value="TriadP49917"/>
    <property type="gene ID" value="TriadG49917"/>
</dbReference>
<dbReference type="GeneID" id="6751308"/>
<dbReference type="KEGG" id="tad:TRIADDRAFT_49917"/>
<dbReference type="CTD" id="6751308"/>
<dbReference type="eggNOG" id="KOG0830">
    <property type="taxonomic scope" value="Eukaryota"/>
</dbReference>
<dbReference type="HOGENOM" id="CLU_058171_1_0_1"/>
<dbReference type="InParanoid" id="B3RPX6"/>
<dbReference type="OMA" id="VKNFFEP"/>
<dbReference type="OrthoDB" id="414863at2759"/>
<dbReference type="PhylomeDB" id="B3RPX6"/>
<dbReference type="Proteomes" id="UP000009022">
    <property type="component" value="Unassembled WGS sequence"/>
</dbReference>
<dbReference type="GO" id="GO:0022627">
    <property type="term" value="C:cytosolic small ribosomal subunit"/>
    <property type="evidence" value="ECO:0000318"/>
    <property type="project" value="GO_Central"/>
</dbReference>
<dbReference type="GO" id="GO:0003735">
    <property type="term" value="F:structural constituent of ribosome"/>
    <property type="evidence" value="ECO:0000318"/>
    <property type="project" value="GO_Central"/>
</dbReference>
<dbReference type="GO" id="GO:0002181">
    <property type="term" value="P:cytoplasmic translation"/>
    <property type="evidence" value="ECO:0000318"/>
    <property type="project" value="GO_Central"/>
</dbReference>
<dbReference type="GO" id="GO:0000028">
    <property type="term" value="P:ribosomal small subunit assembly"/>
    <property type="evidence" value="ECO:0000318"/>
    <property type="project" value="GO_Central"/>
</dbReference>
<dbReference type="CDD" id="cd01425">
    <property type="entry name" value="RPS2"/>
    <property type="match status" value="1"/>
</dbReference>
<dbReference type="FunFam" id="3.40.50.10490:FF:000012">
    <property type="entry name" value="40S ribosomal protein SA"/>
    <property type="match status" value="1"/>
</dbReference>
<dbReference type="Gene3D" id="3.40.50.10490">
    <property type="entry name" value="Glucose-6-phosphate isomerase like protein, domain 1"/>
    <property type="match status" value="1"/>
</dbReference>
<dbReference type="HAMAP" id="MF_03015">
    <property type="entry name" value="Ribosomal_S2_euk"/>
    <property type="match status" value="1"/>
</dbReference>
<dbReference type="InterPro" id="IPR001865">
    <property type="entry name" value="Ribosomal_uS2"/>
</dbReference>
<dbReference type="InterPro" id="IPR032281">
    <property type="entry name" value="Ribosomal_uS2_C"/>
</dbReference>
<dbReference type="InterPro" id="IPR018130">
    <property type="entry name" value="Ribosomal_uS2_CS"/>
</dbReference>
<dbReference type="InterPro" id="IPR027498">
    <property type="entry name" value="Ribosomal_uS2_euk"/>
</dbReference>
<dbReference type="InterPro" id="IPR005707">
    <property type="entry name" value="Ribosomal_uS2_euk/arc"/>
</dbReference>
<dbReference type="InterPro" id="IPR023591">
    <property type="entry name" value="Ribosomal_uS2_flav_dom_sf"/>
</dbReference>
<dbReference type="NCBIfam" id="TIGR01012">
    <property type="entry name" value="uS2_euk_arch"/>
    <property type="match status" value="1"/>
</dbReference>
<dbReference type="PANTHER" id="PTHR11489">
    <property type="entry name" value="40S RIBOSOMAL PROTEIN SA"/>
    <property type="match status" value="1"/>
</dbReference>
<dbReference type="Pfam" id="PF16122">
    <property type="entry name" value="40S_SA_C"/>
    <property type="match status" value="1"/>
</dbReference>
<dbReference type="Pfam" id="PF00318">
    <property type="entry name" value="Ribosomal_S2"/>
    <property type="match status" value="1"/>
</dbReference>
<dbReference type="PRINTS" id="PR00395">
    <property type="entry name" value="RIBOSOMALS2"/>
</dbReference>
<dbReference type="SUPFAM" id="SSF52313">
    <property type="entry name" value="Ribosomal protein S2"/>
    <property type="match status" value="1"/>
</dbReference>
<dbReference type="PROSITE" id="PS00962">
    <property type="entry name" value="RIBOSOMAL_S2_1"/>
    <property type="match status" value="1"/>
</dbReference>
<dbReference type="PROSITE" id="PS00963">
    <property type="entry name" value="RIBOSOMAL_S2_2"/>
    <property type="match status" value="1"/>
</dbReference>
<proteinExistence type="inferred from homology"/>
<gene>
    <name type="ORF">TRIADDRAFT_49917</name>
</gene>
<comment type="function">
    <text evidence="1">Required for the assembly and/or stability of the 40S ribosomal subunit. Required for the processing of the 20S rRNA-precursor to mature 18S rRNA in a late step of the maturation of 40S ribosomal subunits.</text>
</comment>
<comment type="subunit">
    <text evidence="1">Component of the small ribosomal subunit. Mature ribosomes consist of a small (40S) and a large (60S) subunit. The 40S subunit contains about 33 different proteins and 1 molecule of RNA (18S). The 60S subunit contains about 49 different proteins and 3 molecules of RNA (28S, 5.8S and 5S). Interacts with ribosomal protein S21.</text>
</comment>
<comment type="subcellular location">
    <subcellularLocation>
        <location evidence="1">Cytoplasm</location>
    </subcellularLocation>
</comment>
<comment type="similarity">
    <text evidence="1">Belongs to the universal ribosomal protein uS2 family.</text>
</comment>
<evidence type="ECO:0000255" key="1">
    <source>
        <dbReference type="HAMAP-Rule" id="MF_03015"/>
    </source>
</evidence>
<evidence type="ECO:0000256" key="2">
    <source>
        <dbReference type="SAM" id="MobiDB-lite"/>
    </source>
</evidence>
<evidence type="ECO:0000305" key="3"/>
<organism>
    <name type="scientific">Trichoplax adhaerens</name>
    <name type="common">Trichoplax reptans</name>
    <dbReference type="NCBI Taxonomy" id="10228"/>
    <lineage>
        <taxon>Eukaryota</taxon>
        <taxon>Metazoa</taxon>
        <taxon>Placozoa</taxon>
        <taxon>Uniplacotomia</taxon>
        <taxon>Trichoplacea</taxon>
        <taxon>Trichoplacidae</taxon>
        <taxon>Trichoplax</taxon>
    </lineage>
</organism>
<accession>B3RPX6</accession>
<sequence length="286" mass="31695">MSGGLDILRLTADDVSKMLAASAHLGTTNVDYQMEQYVFRRRTDGVHIIDLRQTWEKLLIAARIIASIENPADVCVLSARPYGQRAVLKFAKFTGASPIAGRFTPGTFTNQIQKAYREPRLLIVTDPRVDHQPITEASYVNIPVIAFCNTDSRLRYIDVGIPCNNKGAHAIGLMWWLLAREVLRLRGTISRDTDWEHMPDLFFYRDPEEVEKEEQAQNNKWAAPEQSPALSAAVPSSAAPVEEWSSSPSKETTEWGASNTAAAAKSSWSNETGGEWGAQEGGEWGS</sequence>